<dbReference type="EMBL" id="AE017355">
    <property type="protein sequence ID" value="AAT61983.1"/>
    <property type="molecule type" value="Genomic_DNA"/>
</dbReference>
<dbReference type="RefSeq" id="WP_000147198.1">
    <property type="nucleotide sequence ID" value="NC_005957.1"/>
</dbReference>
<dbReference type="RefSeq" id="YP_035531.1">
    <property type="nucleotide sequence ID" value="NC_005957.1"/>
</dbReference>
<dbReference type="SMR" id="Q6HLP0"/>
<dbReference type="KEGG" id="btk:BT9727_1196"/>
<dbReference type="PATRIC" id="fig|281309.8.peg.1258"/>
<dbReference type="HOGENOM" id="CLU_090664_1_0_9"/>
<dbReference type="Proteomes" id="UP000001301">
    <property type="component" value="Chromosome"/>
</dbReference>
<dbReference type="GO" id="GO:0006089">
    <property type="term" value="P:lactate metabolic process"/>
    <property type="evidence" value="ECO:0007669"/>
    <property type="project" value="UniProtKB-UniRule"/>
</dbReference>
<dbReference type="Gene3D" id="3.40.50.10420">
    <property type="entry name" value="NagB/RpiA/CoA transferase-like"/>
    <property type="match status" value="1"/>
</dbReference>
<dbReference type="HAMAP" id="MF_02104">
    <property type="entry name" value="LutC"/>
    <property type="match status" value="1"/>
</dbReference>
<dbReference type="InterPro" id="IPR024185">
    <property type="entry name" value="FTHF_cligase-like_sf"/>
</dbReference>
<dbReference type="InterPro" id="IPR003741">
    <property type="entry name" value="LUD_dom"/>
</dbReference>
<dbReference type="InterPro" id="IPR022823">
    <property type="entry name" value="LutC"/>
</dbReference>
<dbReference type="InterPro" id="IPR037171">
    <property type="entry name" value="NagB/RpiA_transferase-like"/>
</dbReference>
<dbReference type="PANTHER" id="PTHR43682">
    <property type="entry name" value="LACTATE UTILIZATION PROTEIN C"/>
    <property type="match status" value="1"/>
</dbReference>
<dbReference type="PANTHER" id="PTHR43682:SF1">
    <property type="entry name" value="LACTATE UTILIZATION PROTEIN C"/>
    <property type="match status" value="1"/>
</dbReference>
<dbReference type="Pfam" id="PF02589">
    <property type="entry name" value="LUD_dom"/>
    <property type="match status" value="1"/>
</dbReference>
<dbReference type="SUPFAM" id="SSF100950">
    <property type="entry name" value="NagB/RpiA/CoA transferase-like"/>
    <property type="match status" value="1"/>
</dbReference>
<accession>Q6HLP0</accession>
<sequence>MTGLIQNRDSFLDNIAKELGRTRKTDGVERPVWKNNVNKETLKDYSQEELLEVFKNQCTNIHTTVVETTNDRLREDIQKVIVEYGGGPIMLSADERFDSYGLTSLFKEELPKQNVEVNVWDPEKKEENMRIAERANIGIAFSDYTLAESGTIVVQSHKGQGRSLHFLPTVYFAIIPRETLVPRITQAVQDMNTRVENGEEVASCINFITGPSNSADIEMNLVVGVHGPLKAVYFIV</sequence>
<evidence type="ECO:0000255" key="1">
    <source>
        <dbReference type="HAMAP-Rule" id="MF_02104"/>
    </source>
</evidence>
<proteinExistence type="inferred from homology"/>
<gene>
    <name evidence="1" type="primary">lutC</name>
    <name type="ordered locus">BT9727_1196</name>
</gene>
<organism>
    <name type="scientific">Bacillus thuringiensis subsp. konkukian (strain 97-27)</name>
    <dbReference type="NCBI Taxonomy" id="281309"/>
    <lineage>
        <taxon>Bacteria</taxon>
        <taxon>Bacillati</taxon>
        <taxon>Bacillota</taxon>
        <taxon>Bacilli</taxon>
        <taxon>Bacillales</taxon>
        <taxon>Bacillaceae</taxon>
        <taxon>Bacillus</taxon>
        <taxon>Bacillus cereus group</taxon>
    </lineage>
</organism>
<name>LUTC_BACHK</name>
<comment type="function">
    <text evidence="1">Is involved in L-lactate degradation and allows cells to grow with lactate as the sole carbon source.</text>
</comment>
<comment type="similarity">
    <text evidence="1">Belongs to the LutC/YkgG family.</text>
</comment>
<reference key="1">
    <citation type="journal article" date="2006" name="J. Bacteriol.">
        <title>Pathogenomic sequence analysis of Bacillus cereus and Bacillus thuringiensis isolates closely related to Bacillus anthracis.</title>
        <authorList>
            <person name="Han C.S."/>
            <person name="Xie G."/>
            <person name="Challacombe J.F."/>
            <person name="Altherr M.R."/>
            <person name="Bhotika S.S."/>
            <person name="Bruce D."/>
            <person name="Campbell C.S."/>
            <person name="Campbell M.L."/>
            <person name="Chen J."/>
            <person name="Chertkov O."/>
            <person name="Cleland C."/>
            <person name="Dimitrijevic M."/>
            <person name="Doggett N.A."/>
            <person name="Fawcett J.J."/>
            <person name="Glavina T."/>
            <person name="Goodwin L.A."/>
            <person name="Hill K.K."/>
            <person name="Hitchcock P."/>
            <person name="Jackson P.J."/>
            <person name="Keim P."/>
            <person name="Kewalramani A.R."/>
            <person name="Longmire J."/>
            <person name="Lucas S."/>
            <person name="Malfatti S."/>
            <person name="McMurry K."/>
            <person name="Meincke L.J."/>
            <person name="Misra M."/>
            <person name="Moseman B.L."/>
            <person name="Mundt M."/>
            <person name="Munk A.C."/>
            <person name="Okinaka R.T."/>
            <person name="Parson-Quintana B."/>
            <person name="Reilly L.P."/>
            <person name="Richardson P."/>
            <person name="Robinson D.L."/>
            <person name="Rubin E."/>
            <person name="Saunders E."/>
            <person name="Tapia R."/>
            <person name="Tesmer J.G."/>
            <person name="Thayer N."/>
            <person name="Thompson L.S."/>
            <person name="Tice H."/>
            <person name="Ticknor L.O."/>
            <person name="Wills P.L."/>
            <person name="Brettin T.S."/>
            <person name="Gilna P."/>
        </authorList>
    </citation>
    <scope>NUCLEOTIDE SEQUENCE [LARGE SCALE GENOMIC DNA]</scope>
    <source>
        <strain>97-27</strain>
    </source>
</reference>
<feature type="chain" id="PRO_0000384004" description="Lactate utilization protein C">
    <location>
        <begin position="1"/>
        <end position="236"/>
    </location>
</feature>
<protein>
    <recommendedName>
        <fullName evidence="1">Lactate utilization protein C</fullName>
    </recommendedName>
</protein>